<proteinExistence type="inferred from homology"/>
<accession>B1YNZ5</accession>
<name>AROC_BURA4</name>
<reference key="1">
    <citation type="submission" date="2008-04" db="EMBL/GenBank/DDBJ databases">
        <title>Complete sequence of chromosome 1 of Burkholderia ambifaria MC40-6.</title>
        <authorList>
            <person name="Copeland A."/>
            <person name="Lucas S."/>
            <person name="Lapidus A."/>
            <person name="Glavina del Rio T."/>
            <person name="Dalin E."/>
            <person name="Tice H."/>
            <person name="Pitluck S."/>
            <person name="Chain P."/>
            <person name="Malfatti S."/>
            <person name="Shin M."/>
            <person name="Vergez L."/>
            <person name="Lang D."/>
            <person name="Schmutz J."/>
            <person name="Larimer F."/>
            <person name="Land M."/>
            <person name="Hauser L."/>
            <person name="Kyrpides N."/>
            <person name="Lykidis A."/>
            <person name="Ramette A."/>
            <person name="Konstantinidis K."/>
            <person name="Tiedje J."/>
            <person name="Richardson P."/>
        </authorList>
    </citation>
    <scope>NUCLEOTIDE SEQUENCE [LARGE SCALE GENOMIC DNA]</scope>
    <source>
        <strain>MC40-6</strain>
    </source>
</reference>
<feature type="chain" id="PRO_1000115332" description="Chorismate synthase">
    <location>
        <begin position="1"/>
        <end position="366"/>
    </location>
</feature>
<feature type="binding site" evidence="1">
    <location>
        <position position="48"/>
    </location>
    <ligand>
        <name>NADP(+)</name>
        <dbReference type="ChEBI" id="CHEBI:58349"/>
    </ligand>
</feature>
<feature type="binding site" evidence="1">
    <location>
        <position position="54"/>
    </location>
    <ligand>
        <name>NADP(+)</name>
        <dbReference type="ChEBI" id="CHEBI:58349"/>
    </ligand>
</feature>
<feature type="binding site" evidence="1">
    <location>
        <begin position="125"/>
        <end position="127"/>
    </location>
    <ligand>
        <name>FMN</name>
        <dbReference type="ChEBI" id="CHEBI:58210"/>
    </ligand>
</feature>
<feature type="binding site" evidence="1">
    <location>
        <begin position="238"/>
        <end position="239"/>
    </location>
    <ligand>
        <name>FMN</name>
        <dbReference type="ChEBI" id="CHEBI:58210"/>
    </ligand>
</feature>
<feature type="binding site" evidence="1">
    <location>
        <position position="278"/>
    </location>
    <ligand>
        <name>FMN</name>
        <dbReference type="ChEBI" id="CHEBI:58210"/>
    </ligand>
</feature>
<feature type="binding site" evidence="1">
    <location>
        <begin position="293"/>
        <end position="297"/>
    </location>
    <ligand>
        <name>FMN</name>
        <dbReference type="ChEBI" id="CHEBI:58210"/>
    </ligand>
</feature>
<feature type="binding site" evidence="1">
    <location>
        <position position="319"/>
    </location>
    <ligand>
        <name>FMN</name>
        <dbReference type="ChEBI" id="CHEBI:58210"/>
    </ligand>
</feature>
<dbReference type="EC" id="4.2.3.5" evidence="1"/>
<dbReference type="EMBL" id="CP001025">
    <property type="protein sequence ID" value="ACB63869.1"/>
    <property type="molecule type" value="Genomic_DNA"/>
</dbReference>
<dbReference type="RefSeq" id="WP_012363716.1">
    <property type="nucleotide sequence ID" value="NC_010551.1"/>
</dbReference>
<dbReference type="SMR" id="B1YNZ5"/>
<dbReference type="KEGG" id="bac:BamMC406_1381"/>
<dbReference type="HOGENOM" id="CLU_034547_0_2_4"/>
<dbReference type="OrthoDB" id="9771806at2"/>
<dbReference type="UniPathway" id="UPA00053">
    <property type="reaction ID" value="UER00090"/>
</dbReference>
<dbReference type="Proteomes" id="UP000001680">
    <property type="component" value="Chromosome 1"/>
</dbReference>
<dbReference type="GO" id="GO:0005829">
    <property type="term" value="C:cytosol"/>
    <property type="evidence" value="ECO:0007669"/>
    <property type="project" value="TreeGrafter"/>
</dbReference>
<dbReference type="GO" id="GO:0004107">
    <property type="term" value="F:chorismate synthase activity"/>
    <property type="evidence" value="ECO:0007669"/>
    <property type="project" value="UniProtKB-UniRule"/>
</dbReference>
<dbReference type="GO" id="GO:0010181">
    <property type="term" value="F:FMN binding"/>
    <property type="evidence" value="ECO:0007669"/>
    <property type="project" value="TreeGrafter"/>
</dbReference>
<dbReference type="GO" id="GO:0008652">
    <property type="term" value="P:amino acid biosynthetic process"/>
    <property type="evidence" value="ECO:0007669"/>
    <property type="project" value="UniProtKB-KW"/>
</dbReference>
<dbReference type="GO" id="GO:0009073">
    <property type="term" value="P:aromatic amino acid family biosynthetic process"/>
    <property type="evidence" value="ECO:0007669"/>
    <property type="project" value="UniProtKB-KW"/>
</dbReference>
<dbReference type="GO" id="GO:0009423">
    <property type="term" value="P:chorismate biosynthetic process"/>
    <property type="evidence" value="ECO:0007669"/>
    <property type="project" value="UniProtKB-UniRule"/>
</dbReference>
<dbReference type="CDD" id="cd07304">
    <property type="entry name" value="Chorismate_synthase"/>
    <property type="match status" value="1"/>
</dbReference>
<dbReference type="FunFam" id="3.60.150.10:FF:000001">
    <property type="entry name" value="Chorismate synthase"/>
    <property type="match status" value="1"/>
</dbReference>
<dbReference type="Gene3D" id="3.60.150.10">
    <property type="entry name" value="Chorismate synthase AroC"/>
    <property type="match status" value="1"/>
</dbReference>
<dbReference type="HAMAP" id="MF_00300">
    <property type="entry name" value="Chorismate_synth"/>
    <property type="match status" value="1"/>
</dbReference>
<dbReference type="InterPro" id="IPR000453">
    <property type="entry name" value="Chorismate_synth"/>
</dbReference>
<dbReference type="InterPro" id="IPR035904">
    <property type="entry name" value="Chorismate_synth_AroC_sf"/>
</dbReference>
<dbReference type="InterPro" id="IPR020541">
    <property type="entry name" value="Chorismate_synthase_CS"/>
</dbReference>
<dbReference type="NCBIfam" id="TIGR00033">
    <property type="entry name" value="aroC"/>
    <property type="match status" value="1"/>
</dbReference>
<dbReference type="NCBIfam" id="NF003793">
    <property type="entry name" value="PRK05382.1"/>
    <property type="match status" value="1"/>
</dbReference>
<dbReference type="PANTHER" id="PTHR21085">
    <property type="entry name" value="CHORISMATE SYNTHASE"/>
    <property type="match status" value="1"/>
</dbReference>
<dbReference type="PANTHER" id="PTHR21085:SF0">
    <property type="entry name" value="CHORISMATE SYNTHASE"/>
    <property type="match status" value="1"/>
</dbReference>
<dbReference type="Pfam" id="PF01264">
    <property type="entry name" value="Chorismate_synt"/>
    <property type="match status" value="1"/>
</dbReference>
<dbReference type="PIRSF" id="PIRSF001456">
    <property type="entry name" value="Chorismate_synth"/>
    <property type="match status" value="1"/>
</dbReference>
<dbReference type="SUPFAM" id="SSF103263">
    <property type="entry name" value="Chorismate synthase, AroC"/>
    <property type="match status" value="1"/>
</dbReference>
<dbReference type="PROSITE" id="PS00787">
    <property type="entry name" value="CHORISMATE_SYNTHASE_1"/>
    <property type="match status" value="1"/>
</dbReference>
<dbReference type="PROSITE" id="PS00788">
    <property type="entry name" value="CHORISMATE_SYNTHASE_2"/>
    <property type="match status" value="1"/>
</dbReference>
<dbReference type="PROSITE" id="PS00789">
    <property type="entry name" value="CHORISMATE_SYNTHASE_3"/>
    <property type="match status" value="1"/>
</dbReference>
<comment type="function">
    <text evidence="1">Catalyzes the anti-1,4-elimination of the C-3 phosphate and the C-6 proR hydrogen from 5-enolpyruvylshikimate-3-phosphate (EPSP) to yield chorismate, which is the branch point compound that serves as the starting substrate for the three terminal pathways of aromatic amino acid biosynthesis. This reaction introduces a second double bond into the aromatic ring system.</text>
</comment>
<comment type="catalytic activity">
    <reaction evidence="1">
        <text>5-O-(1-carboxyvinyl)-3-phosphoshikimate = chorismate + phosphate</text>
        <dbReference type="Rhea" id="RHEA:21020"/>
        <dbReference type="ChEBI" id="CHEBI:29748"/>
        <dbReference type="ChEBI" id="CHEBI:43474"/>
        <dbReference type="ChEBI" id="CHEBI:57701"/>
        <dbReference type="EC" id="4.2.3.5"/>
    </reaction>
</comment>
<comment type="cofactor">
    <cofactor evidence="1">
        <name>FMNH2</name>
        <dbReference type="ChEBI" id="CHEBI:57618"/>
    </cofactor>
    <text evidence="1">Reduced FMN (FMNH(2)).</text>
</comment>
<comment type="pathway">
    <text evidence="1">Metabolic intermediate biosynthesis; chorismate biosynthesis; chorismate from D-erythrose 4-phosphate and phosphoenolpyruvate: step 7/7.</text>
</comment>
<comment type="subunit">
    <text evidence="1">Homotetramer.</text>
</comment>
<comment type="similarity">
    <text evidence="1">Belongs to the chorismate synthase family.</text>
</comment>
<sequence>MSGNTLGTLFTVTTFGESHGPAIGCVIDGCPPGMGLTEADIQVELDRRKPGTSRHVTQRQEADEVEILSGVFEGVTTGTPIALLIRNTDQRSKDYGNIVETFRPGHADYTYWQKYGIRDYRGGGRSSARLTAPIVGAGAVAKKWLRERFGVEVRGYMSCLGDIDVPFVDWSHVRENPFFSPNAAIVPELEAYMDALRKDGDSIGARIDVVASGVPVGWGEPVFDRLDADIAKAMMSINAVKGVEIGAGFDSVAQRGSVHGDELTPAGFIGNHAGGVLGGISTGQDITVSIAIKPTSSIRTPRRSITKAGDEATVETFGRHDPCVGIRATPIAESMLALVLIDHALRHRAQCGDVETSTPKISGSAT</sequence>
<organism>
    <name type="scientific">Burkholderia ambifaria (strain MC40-6)</name>
    <dbReference type="NCBI Taxonomy" id="398577"/>
    <lineage>
        <taxon>Bacteria</taxon>
        <taxon>Pseudomonadati</taxon>
        <taxon>Pseudomonadota</taxon>
        <taxon>Betaproteobacteria</taxon>
        <taxon>Burkholderiales</taxon>
        <taxon>Burkholderiaceae</taxon>
        <taxon>Burkholderia</taxon>
        <taxon>Burkholderia cepacia complex</taxon>
    </lineage>
</organism>
<keyword id="KW-0028">Amino-acid biosynthesis</keyword>
<keyword id="KW-0057">Aromatic amino acid biosynthesis</keyword>
<keyword id="KW-0274">FAD</keyword>
<keyword id="KW-0285">Flavoprotein</keyword>
<keyword id="KW-0288">FMN</keyword>
<keyword id="KW-0456">Lyase</keyword>
<keyword id="KW-0521">NADP</keyword>
<evidence type="ECO:0000255" key="1">
    <source>
        <dbReference type="HAMAP-Rule" id="MF_00300"/>
    </source>
</evidence>
<gene>
    <name evidence="1" type="primary">aroC</name>
    <name type="ordered locus">BamMC406_1381</name>
</gene>
<protein>
    <recommendedName>
        <fullName evidence="1">Chorismate synthase</fullName>
        <shortName evidence="1">CS</shortName>
        <ecNumber evidence="1">4.2.3.5</ecNumber>
    </recommendedName>
    <alternativeName>
        <fullName evidence="1">5-enolpyruvylshikimate-3-phosphate phospholyase</fullName>
    </alternativeName>
</protein>